<name>MSCL_ACTPJ</name>
<sequence>MSILKEFREFAVKGNVVDMAVGVIIGGAFGKIVSSLVSDVVMPPIGWLIGGVDFKDLAIEIAPAKEGAEAVMLKYGAFIQNVFLLGVIAIAADGMGTLINKIKKPAEAAPAEPTAEEKLLTEIRDLLKK</sequence>
<feature type="chain" id="PRO_1000094875" description="Large-conductance mechanosensitive channel">
    <location>
        <begin position="1"/>
        <end position="129"/>
    </location>
</feature>
<feature type="transmembrane region" description="Helical" evidence="1">
    <location>
        <begin position="10"/>
        <end position="30"/>
    </location>
</feature>
<feature type="transmembrane region" description="Helical" evidence="1">
    <location>
        <begin position="70"/>
        <end position="90"/>
    </location>
</feature>
<accession>B0BRR8</accession>
<protein>
    <recommendedName>
        <fullName evidence="1">Large-conductance mechanosensitive channel</fullName>
    </recommendedName>
</protein>
<evidence type="ECO:0000255" key="1">
    <source>
        <dbReference type="HAMAP-Rule" id="MF_00115"/>
    </source>
</evidence>
<comment type="function">
    <text evidence="1">Channel that opens in response to stretch forces in the membrane lipid bilayer. May participate in the regulation of osmotic pressure changes within the cell.</text>
</comment>
<comment type="subunit">
    <text evidence="1">Homopentamer.</text>
</comment>
<comment type="subcellular location">
    <subcellularLocation>
        <location evidence="1">Cell inner membrane</location>
        <topology evidence="1">Multi-pass membrane protein</topology>
    </subcellularLocation>
</comment>
<comment type="similarity">
    <text evidence="1">Belongs to the MscL family.</text>
</comment>
<proteinExistence type="inferred from homology"/>
<keyword id="KW-0997">Cell inner membrane</keyword>
<keyword id="KW-1003">Cell membrane</keyword>
<keyword id="KW-0407">Ion channel</keyword>
<keyword id="KW-0406">Ion transport</keyword>
<keyword id="KW-0472">Membrane</keyword>
<keyword id="KW-0812">Transmembrane</keyword>
<keyword id="KW-1133">Transmembrane helix</keyword>
<keyword id="KW-0813">Transport</keyword>
<gene>
    <name evidence="1" type="primary">mscL</name>
    <name type="ordered locus">APJL_1625</name>
</gene>
<dbReference type="EMBL" id="CP000687">
    <property type="protein sequence ID" value="ABY70177.1"/>
    <property type="molecule type" value="Genomic_DNA"/>
</dbReference>
<dbReference type="RefSeq" id="WP_012263303.1">
    <property type="nucleotide sequence ID" value="NC_010278.1"/>
</dbReference>
<dbReference type="KEGG" id="apj:APJL_1625"/>
<dbReference type="HOGENOM" id="CLU_095787_0_0_6"/>
<dbReference type="Proteomes" id="UP000008547">
    <property type="component" value="Chromosome"/>
</dbReference>
<dbReference type="GO" id="GO:0005886">
    <property type="term" value="C:plasma membrane"/>
    <property type="evidence" value="ECO:0007669"/>
    <property type="project" value="UniProtKB-SubCell"/>
</dbReference>
<dbReference type="GO" id="GO:0008381">
    <property type="term" value="F:mechanosensitive monoatomic ion channel activity"/>
    <property type="evidence" value="ECO:0007669"/>
    <property type="project" value="UniProtKB-UniRule"/>
</dbReference>
<dbReference type="Gene3D" id="1.10.1200.120">
    <property type="entry name" value="Large-conductance mechanosensitive channel, MscL, domain 1"/>
    <property type="match status" value="1"/>
</dbReference>
<dbReference type="HAMAP" id="MF_00115">
    <property type="entry name" value="MscL"/>
    <property type="match status" value="1"/>
</dbReference>
<dbReference type="InterPro" id="IPR019823">
    <property type="entry name" value="Mechanosensitive_channel_CS"/>
</dbReference>
<dbReference type="InterPro" id="IPR001185">
    <property type="entry name" value="MS_channel"/>
</dbReference>
<dbReference type="InterPro" id="IPR037673">
    <property type="entry name" value="MSC/AndL"/>
</dbReference>
<dbReference type="InterPro" id="IPR036019">
    <property type="entry name" value="MscL_channel"/>
</dbReference>
<dbReference type="NCBIfam" id="TIGR00220">
    <property type="entry name" value="mscL"/>
    <property type="match status" value="1"/>
</dbReference>
<dbReference type="NCBIfam" id="NF001843">
    <property type="entry name" value="PRK00567.1-4"/>
    <property type="match status" value="1"/>
</dbReference>
<dbReference type="PANTHER" id="PTHR30266:SF2">
    <property type="entry name" value="LARGE-CONDUCTANCE MECHANOSENSITIVE CHANNEL"/>
    <property type="match status" value="1"/>
</dbReference>
<dbReference type="PANTHER" id="PTHR30266">
    <property type="entry name" value="MECHANOSENSITIVE CHANNEL MSCL"/>
    <property type="match status" value="1"/>
</dbReference>
<dbReference type="Pfam" id="PF01741">
    <property type="entry name" value="MscL"/>
    <property type="match status" value="1"/>
</dbReference>
<dbReference type="SUPFAM" id="SSF81330">
    <property type="entry name" value="Gated mechanosensitive channel"/>
    <property type="match status" value="1"/>
</dbReference>
<dbReference type="PROSITE" id="PS01327">
    <property type="entry name" value="MSCL"/>
    <property type="match status" value="1"/>
</dbReference>
<organism>
    <name type="scientific">Actinobacillus pleuropneumoniae serotype 3 (strain JL03)</name>
    <dbReference type="NCBI Taxonomy" id="434271"/>
    <lineage>
        <taxon>Bacteria</taxon>
        <taxon>Pseudomonadati</taxon>
        <taxon>Pseudomonadota</taxon>
        <taxon>Gammaproteobacteria</taxon>
        <taxon>Pasteurellales</taxon>
        <taxon>Pasteurellaceae</taxon>
        <taxon>Actinobacillus</taxon>
    </lineage>
</organism>
<reference key="1">
    <citation type="journal article" date="2008" name="PLoS ONE">
        <title>Genome biology of Actinobacillus pleuropneumoniae JL03, an isolate of serotype 3 prevalent in China.</title>
        <authorList>
            <person name="Xu Z."/>
            <person name="Zhou Y."/>
            <person name="Li L."/>
            <person name="Zhou R."/>
            <person name="Xiao S."/>
            <person name="Wan Y."/>
            <person name="Zhang S."/>
            <person name="Wang K."/>
            <person name="Li W."/>
            <person name="Li L."/>
            <person name="Jin H."/>
            <person name="Kang M."/>
            <person name="Dalai B."/>
            <person name="Li T."/>
            <person name="Liu L."/>
            <person name="Cheng Y."/>
            <person name="Zhang L."/>
            <person name="Xu T."/>
            <person name="Zheng H."/>
            <person name="Pu S."/>
            <person name="Wang B."/>
            <person name="Gu W."/>
            <person name="Zhang X.L."/>
            <person name="Zhu G.-F."/>
            <person name="Wang S."/>
            <person name="Zhao G.-P."/>
            <person name="Chen H."/>
        </authorList>
    </citation>
    <scope>NUCLEOTIDE SEQUENCE [LARGE SCALE GENOMIC DNA]</scope>
    <source>
        <strain>JL03</strain>
    </source>
</reference>